<reference key="1">
    <citation type="journal article" date="2009" name="Science">
        <title>The dynamics and time scale of ongoing genomic erosion in symbiotic bacteria.</title>
        <authorList>
            <person name="Moran N.A."/>
            <person name="McLaughlin H.J."/>
            <person name="Sorek R."/>
        </authorList>
    </citation>
    <scope>NUCLEOTIDE SEQUENCE [LARGE SCALE GENOMIC DNA]</scope>
    <source>
        <strain>5A</strain>
    </source>
</reference>
<gene>
    <name evidence="1" type="primary">rplB</name>
    <name type="ordered locus">BUAP5A_514</name>
</gene>
<accession>B8D9U4</accession>
<name>RL2_BUCA5</name>
<dbReference type="EMBL" id="CP001161">
    <property type="protein sequence ID" value="ACL30865.1"/>
    <property type="molecule type" value="Genomic_DNA"/>
</dbReference>
<dbReference type="RefSeq" id="WP_009874472.1">
    <property type="nucleotide sequence ID" value="NC_011833.1"/>
</dbReference>
<dbReference type="SMR" id="B8D9U4"/>
<dbReference type="KEGG" id="bap:BUAP5A_514"/>
<dbReference type="HOGENOM" id="CLU_036235_2_1_6"/>
<dbReference type="OrthoDB" id="9778722at2"/>
<dbReference type="Proteomes" id="UP000006904">
    <property type="component" value="Chromosome"/>
</dbReference>
<dbReference type="GO" id="GO:0015934">
    <property type="term" value="C:large ribosomal subunit"/>
    <property type="evidence" value="ECO:0007669"/>
    <property type="project" value="InterPro"/>
</dbReference>
<dbReference type="GO" id="GO:0019843">
    <property type="term" value="F:rRNA binding"/>
    <property type="evidence" value="ECO:0007669"/>
    <property type="project" value="UniProtKB-UniRule"/>
</dbReference>
<dbReference type="GO" id="GO:0003735">
    <property type="term" value="F:structural constituent of ribosome"/>
    <property type="evidence" value="ECO:0007669"/>
    <property type="project" value="InterPro"/>
</dbReference>
<dbReference type="GO" id="GO:0016740">
    <property type="term" value="F:transferase activity"/>
    <property type="evidence" value="ECO:0007669"/>
    <property type="project" value="InterPro"/>
</dbReference>
<dbReference type="GO" id="GO:0002181">
    <property type="term" value="P:cytoplasmic translation"/>
    <property type="evidence" value="ECO:0007669"/>
    <property type="project" value="TreeGrafter"/>
</dbReference>
<dbReference type="FunFam" id="2.30.30.30:FF:000001">
    <property type="entry name" value="50S ribosomal protein L2"/>
    <property type="match status" value="1"/>
</dbReference>
<dbReference type="FunFam" id="2.40.50.140:FF:000003">
    <property type="entry name" value="50S ribosomal protein L2"/>
    <property type="match status" value="1"/>
</dbReference>
<dbReference type="FunFam" id="4.10.950.10:FF:000001">
    <property type="entry name" value="50S ribosomal protein L2"/>
    <property type="match status" value="1"/>
</dbReference>
<dbReference type="Gene3D" id="2.30.30.30">
    <property type="match status" value="1"/>
</dbReference>
<dbReference type="Gene3D" id="2.40.50.140">
    <property type="entry name" value="Nucleic acid-binding proteins"/>
    <property type="match status" value="1"/>
</dbReference>
<dbReference type="Gene3D" id="4.10.950.10">
    <property type="entry name" value="Ribosomal protein L2, domain 3"/>
    <property type="match status" value="1"/>
</dbReference>
<dbReference type="HAMAP" id="MF_01320_B">
    <property type="entry name" value="Ribosomal_uL2_B"/>
    <property type="match status" value="1"/>
</dbReference>
<dbReference type="InterPro" id="IPR012340">
    <property type="entry name" value="NA-bd_OB-fold"/>
</dbReference>
<dbReference type="InterPro" id="IPR014722">
    <property type="entry name" value="Rib_uL2_dom2"/>
</dbReference>
<dbReference type="InterPro" id="IPR002171">
    <property type="entry name" value="Ribosomal_uL2"/>
</dbReference>
<dbReference type="InterPro" id="IPR005880">
    <property type="entry name" value="Ribosomal_uL2_bac/org-type"/>
</dbReference>
<dbReference type="InterPro" id="IPR022669">
    <property type="entry name" value="Ribosomal_uL2_C"/>
</dbReference>
<dbReference type="InterPro" id="IPR022671">
    <property type="entry name" value="Ribosomal_uL2_CS"/>
</dbReference>
<dbReference type="InterPro" id="IPR014726">
    <property type="entry name" value="Ribosomal_uL2_dom3"/>
</dbReference>
<dbReference type="InterPro" id="IPR022666">
    <property type="entry name" value="Ribosomal_uL2_RNA-bd_dom"/>
</dbReference>
<dbReference type="InterPro" id="IPR008991">
    <property type="entry name" value="Translation_prot_SH3-like_sf"/>
</dbReference>
<dbReference type="NCBIfam" id="TIGR01171">
    <property type="entry name" value="rplB_bact"/>
    <property type="match status" value="1"/>
</dbReference>
<dbReference type="PANTHER" id="PTHR13691:SF5">
    <property type="entry name" value="LARGE RIBOSOMAL SUBUNIT PROTEIN UL2M"/>
    <property type="match status" value="1"/>
</dbReference>
<dbReference type="PANTHER" id="PTHR13691">
    <property type="entry name" value="RIBOSOMAL PROTEIN L2"/>
    <property type="match status" value="1"/>
</dbReference>
<dbReference type="Pfam" id="PF00181">
    <property type="entry name" value="Ribosomal_L2"/>
    <property type="match status" value="1"/>
</dbReference>
<dbReference type="Pfam" id="PF03947">
    <property type="entry name" value="Ribosomal_L2_C"/>
    <property type="match status" value="1"/>
</dbReference>
<dbReference type="PIRSF" id="PIRSF002158">
    <property type="entry name" value="Ribosomal_L2"/>
    <property type="match status" value="1"/>
</dbReference>
<dbReference type="SMART" id="SM01383">
    <property type="entry name" value="Ribosomal_L2"/>
    <property type="match status" value="1"/>
</dbReference>
<dbReference type="SMART" id="SM01382">
    <property type="entry name" value="Ribosomal_L2_C"/>
    <property type="match status" value="1"/>
</dbReference>
<dbReference type="SUPFAM" id="SSF50249">
    <property type="entry name" value="Nucleic acid-binding proteins"/>
    <property type="match status" value="1"/>
</dbReference>
<dbReference type="SUPFAM" id="SSF50104">
    <property type="entry name" value="Translation proteins SH3-like domain"/>
    <property type="match status" value="1"/>
</dbReference>
<dbReference type="PROSITE" id="PS00467">
    <property type="entry name" value="RIBOSOMAL_L2"/>
    <property type="match status" value="1"/>
</dbReference>
<keyword id="KW-0687">Ribonucleoprotein</keyword>
<keyword id="KW-0689">Ribosomal protein</keyword>
<keyword id="KW-0694">RNA-binding</keyword>
<keyword id="KW-0699">rRNA-binding</keyword>
<evidence type="ECO:0000255" key="1">
    <source>
        <dbReference type="HAMAP-Rule" id="MF_01320"/>
    </source>
</evidence>
<evidence type="ECO:0000256" key="2">
    <source>
        <dbReference type="SAM" id="MobiDB-lite"/>
    </source>
</evidence>
<evidence type="ECO:0000305" key="3"/>
<feature type="chain" id="PRO_1000165727" description="Large ribosomal subunit protein uL2">
    <location>
        <begin position="1"/>
        <end position="273"/>
    </location>
</feature>
<feature type="region of interest" description="Disordered" evidence="2">
    <location>
        <begin position="224"/>
        <end position="264"/>
    </location>
</feature>
<feature type="compositionally biased region" description="Basic residues" evidence="2">
    <location>
        <begin position="253"/>
        <end position="264"/>
    </location>
</feature>
<organism>
    <name type="scientific">Buchnera aphidicola subsp. Acyrthosiphon pisum (strain 5A)</name>
    <dbReference type="NCBI Taxonomy" id="563178"/>
    <lineage>
        <taxon>Bacteria</taxon>
        <taxon>Pseudomonadati</taxon>
        <taxon>Pseudomonadota</taxon>
        <taxon>Gammaproteobacteria</taxon>
        <taxon>Enterobacterales</taxon>
        <taxon>Erwiniaceae</taxon>
        <taxon>Buchnera</taxon>
    </lineage>
</organism>
<protein>
    <recommendedName>
        <fullName evidence="1">Large ribosomal subunit protein uL2</fullName>
    </recommendedName>
    <alternativeName>
        <fullName evidence="3">50S ribosomal protein L2</fullName>
    </alternativeName>
</protein>
<comment type="function">
    <text evidence="1">One of the primary rRNA binding proteins. Required for association of the 30S and 50S subunits to form the 70S ribosome, for tRNA binding and peptide bond formation. It has been suggested to have peptidyltransferase activity; this is somewhat controversial. Makes several contacts with the 16S rRNA in the 70S ribosome.</text>
</comment>
<comment type="subunit">
    <text evidence="1">Part of the 50S ribosomal subunit. Forms a bridge to the 30S subunit in the 70S ribosome.</text>
</comment>
<comment type="similarity">
    <text evidence="1">Belongs to the universal ribosomal protein uL2 family.</text>
</comment>
<sequence length="273" mass="30361">MAVVKCKPTSPGRRHVIKVVNNELYKGKPYSLLLRKKSKSGGRNNNGRITTRHIGGGHKRAYRIVDFKRNKDDIGATVERFEYDPNRSSNIALILYKDGERKYILAPKGIKIGDTIISGLRAPIKTGNTLPLKNIPVGTFVHNVELKPGKGGQIARSAGSYVQLVAFDEEYATLRLRSGEMRKTQSNCRATIGEVGNSEHMLKVLGKAGASRWIGIRPTVRGTAMNPVDHPHGGGEGRNFGKHPVTPWGIQTKGKKTRKNKRTDKFILRHRRK</sequence>
<proteinExistence type="inferred from homology"/>